<dbReference type="EC" id="3.4.13.9" evidence="1"/>
<dbReference type="EMBL" id="CP000507">
    <property type="protein sequence ID" value="ABL98245.1"/>
    <property type="molecule type" value="Genomic_DNA"/>
</dbReference>
<dbReference type="RefSeq" id="WP_011758156.1">
    <property type="nucleotide sequence ID" value="NC_008700.1"/>
</dbReference>
<dbReference type="SMR" id="A1S1I9"/>
<dbReference type="STRING" id="326297.Sama_0033"/>
<dbReference type="MEROPS" id="M24.003"/>
<dbReference type="KEGG" id="saz:Sama_0033"/>
<dbReference type="eggNOG" id="COG0006">
    <property type="taxonomic scope" value="Bacteria"/>
</dbReference>
<dbReference type="HOGENOM" id="CLU_050675_0_0_6"/>
<dbReference type="OrthoDB" id="9806388at2"/>
<dbReference type="Proteomes" id="UP000009175">
    <property type="component" value="Chromosome"/>
</dbReference>
<dbReference type="GO" id="GO:0005829">
    <property type="term" value="C:cytosol"/>
    <property type="evidence" value="ECO:0007669"/>
    <property type="project" value="TreeGrafter"/>
</dbReference>
<dbReference type="GO" id="GO:0004177">
    <property type="term" value="F:aminopeptidase activity"/>
    <property type="evidence" value="ECO:0007669"/>
    <property type="project" value="TreeGrafter"/>
</dbReference>
<dbReference type="GO" id="GO:0046872">
    <property type="term" value="F:metal ion binding"/>
    <property type="evidence" value="ECO:0007669"/>
    <property type="project" value="UniProtKB-KW"/>
</dbReference>
<dbReference type="GO" id="GO:0008235">
    <property type="term" value="F:metalloexopeptidase activity"/>
    <property type="evidence" value="ECO:0007669"/>
    <property type="project" value="UniProtKB-UniRule"/>
</dbReference>
<dbReference type="GO" id="GO:0016795">
    <property type="term" value="F:phosphoric triester hydrolase activity"/>
    <property type="evidence" value="ECO:0007669"/>
    <property type="project" value="InterPro"/>
</dbReference>
<dbReference type="GO" id="GO:0102009">
    <property type="term" value="F:proline dipeptidase activity"/>
    <property type="evidence" value="ECO:0007669"/>
    <property type="project" value="UniProtKB-EC"/>
</dbReference>
<dbReference type="GO" id="GO:0006508">
    <property type="term" value="P:proteolysis"/>
    <property type="evidence" value="ECO:0007669"/>
    <property type="project" value="UniProtKB-KW"/>
</dbReference>
<dbReference type="CDD" id="cd01087">
    <property type="entry name" value="Prolidase"/>
    <property type="match status" value="1"/>
</dbReference>
<dbReference type="Gene3D" id="3.90.230.10">
    <property type="entry name" value="Creatinase/methionine aminopeptidase superfamily"/>
    <property type="match status" value="1"/>
</dbReference>
<dbReference type="Gene3D" id="3.40.350.10">
    <property type="entry name" value="Creatinase/prolidase N-terminal domain"/>
    <property type="match status" value="1"/>
</dbReference>
<dbReference type="HAMAP" id="MF_01279">
    <property type="entry name" value="X_Pro_dipeptid"/>
    <property type="match status" value="1"/>
</dbReference>
<dbReference type="InterPro" id="IPR029149">
    <property type="entry name" value="Creatin/AminoP/Spt16_N"/>
</dbReference>
<dbReference type="InterPro" id="IPR036005">
    <property type="entry name" value="Creatinase/aminopeptidase-like"/>
</dbReference>
<dbReference type="InterPro" id="IPR048819">
    <property type="entry name" value="PepQ_N"/>
</dbReference>
<dbReference type="InterPro" id="IPR000994">
    <property type="entry name" value="Pept_M24"/>
</dbReference>
<dbReference type="InterPro" id="IPR001131">
    <property type="entry name" value="Peptidase_M24B_aminopep-P_CS"/>
</dbReference>
<dbReference type="InterPro" id="IPR052433">
    <property type="entry name" value="X-Pro_dipept-like"/>
</dbReference>
<dbReference type="InterPro" id="IPR022846">
    <property type="entry name" value="X_Pro_dipept"/>
</dbReference>
<dbReference type="NCBIfam" id="NF010133">
    <property type="entry name" value="PRK13607.1"/>
    <property type="match status" value="1"/>
</dbReference>
<dbReference type="PANTHER" id="PTHR43226">
    <property type="entry name" value="XAA-PRO AMINOPEPTIDASE 3"/>
    <property type="match status" value="1"/>
</dbReference>
<dbReference type="PANTHER" id="PTHR43226:SF8">
    <property type="entry name" value="XAA-PRO DIPEPTIDASE"/>
    <property type="match status" value="1"/>
</dbReference>
<dbReference type="Pfam" id="PF21216">
    <property type="entry name" value="PepQ_N"/>
    <property type="match status" value="1"/>
</dbReference>
<dbReference type="Pfam" id="PF00557">
    <property type="entry name" value="Peptidase_M24"/>
    <property type="match status" value="1"/>
</dbReference>
<dbReference type="SUPFAM" id="SSF55920">
    <property type="entry name" value="Creatinase/aminopeptidase"/>
    <property type="match status" value="1"/>
</dbReference>
<dbReference type="PROSITE" id="PS00491">
    <property type="entry name" value="PROLINE_PEPTIDASE"/>
    <property type="match status" value="1"/>
</dbReference>
<accession>A1S1I9</accession>
<feature type="chain" id="PRO_0000303857" description="Xaa-Pro dipeptidase">
    <location>
        <begin position="1"/>
        <end position="439"/>
    </location>
</feature>
<feature type="binding site" evidence="1">
    <location>
        <position position="244"/>
    </location>
    <ligand>
        <name>Mn(2+)</name>
        <dbReference type="ChEBI" id="CHEBI:29035"/>
        <label>2</label>
    </ligand>
</feature>
<feature type="binding site" evidence="1">
    <location>
        <position position="255"/>
    </location>
    <ligand>
        <name>Mn(2+)</name>
        <dbReference type="ChEBI" id="CHEBI:29035"/>
        <label>1</label>
    </ligand>
</feature>
<feature type="binding site" evidence="1">
    <location>
        <position position="255"/>
    </location>
    <ligand>
        <name>Mn(2+)</name>
        <dbReference type="ChEBI" id="CHEBI:29035"/>
        <label>2</label>
    </ligand>
</feature>
<feature type="binding site" evidence="1">
    <location>
        <position position="335"/>
    </location>
    <ligand>
        <name>Mn(2+)</name>
        <dbReference type="ChEBI" id="CHEBI:29035"/>
        <label>1</label>
    </ligand>
</feature>
<feature type="binding site" evidence="1">
    <location>
        <position position="380"/>
    </location>
    <ligand>
        <name>Mn(2+)</name>
        <dbReference type="ChEBI" id="CHEBI:29035"/>
        <label>1</label>
    </ligand>
</feature>
<feature type="binding site" evidence="1">
    <location>
        <position position="419"/>
    </location>
    <ligand>
        <name>Mn(2+)</name>
        <dbReference type="ChEBI" id="CHEBI:29035"/>
        <label>1</label>
    </ligand>
</feature>
<feature type="binding site" evidence="1">
    <location>
        <position position="419"/>
    </location>
    <ligand>
        <name>Mn(2+)</name>
        <dbReference type="ChEBI" id="CHEBI:29035"/>
        <label>2</label>
    </ligand>
</feature>
<proteinExistence type="inferred from homology"/>
<name>PEPQ_SHEAM</name>
<organism>
    <name type="scientific">Shewanella amazonensis (strain ATCC BAA-1098 / SB2B)</name>
    <dbReference type="NCBI Taxonomy" id="326297"/>
    <lineage>
        <taxon>Bacteria</taxon>
        <taxon>Pseudomonadati</taxon>
        <taxon>Pseudomonadota</taxon>
        <taxon>Gammaproteobacteria</taxon>
        <taxon>Alteromonadales</taxon>
        <taxon>Shewanellaceae</taxon>
        <taxon>Shewanella</taxon>
    </lineage>
</organism>
<reference key="1">
    <citation type="submission" date="2006-12" db="EMBL/GenBank/DDBJ databases">
        <title>Complete sequence of Shewanella amazonensis SB2B.</title>
        <authorList>
            <consortium name="US DOE Joint Genome Institute"/>
            <person name="Copeland A."/>
            <person name="Lucas S."/>
            <person name="Lapidus A."/>
            <person name="Barry K."/>
            <person name="Detter J.C."/>
            <person name="Glavina del Rio T."/>
            <person name="Hammon N."/>
            <person name="Israni S."/>
            <person name="Dalin E."/>
            <person name="Tice H."/>
            <person name="Pitluck S."/>
            <person name="Munk A.C."/>
            <person name="Brettin T."/>
            <person name="Bruce D."/>
            <person name="Han C."/>
            <person name="Tapia R."/>
            <person name="Gilna P."/>
            <person name="Schmutz J."/>
            <person name="Larimer F."/>
            <person name="Land M."/>
            <person name="Hauser L."/>
            <person name="Kyrpides N."/>
            <person name="Mikhailova N."/>
            <person name="Fredrickson J."/>
            <person name="Richardson P."/>
        </authorList>
    </citation>
    <scope>NUCLEOTIDE SEQUENCE [LARGE SCALE GENOMIC DNA]</scope>
    <source>
        <strain>ATCC BAA-1098 / SB2B</strain>
    </source>
</reference>
<evidence type="ECO:0000255" key="1">
    <source>
        <dbReference type="HAMAP-Rule" id="MF_01279"/>
    </source>
</evidence>
<keyword id="KW-0224">Dipeptidase</keyword>
<keyword id="KW-0378">Hydrolase</keyword>
<keyword id="KW-0464">Manganese</keyword>
<keyword id="KW-0479">Metal-binding</keyword>
<keyword id="KW-0482">Metalloprotease</keyword>
<keyword id="KW-0645">Protease</keyword>
<keyword id="KW-1185">Reference proteome</keyword>
<gene>
    <name evidence="1" type="primary">pepQ</name>
    <name type="ordered locus">Sama_0033</name>
</gene>
<sequence>MENLAPLYVNHINEQNRRVADVLAREQLEGLAIHSGQYHRQFLDDINYPFKANPHFKAWLPVLDIPNCWILTNGRDKPVLVFYRPVDFWHKVSDVPESFWTEHFEIKLLTKAEKVADLLPKNLDTWAYIGEHLDVADVLGFKNRNPDGVMNYFHWHRSFKTDYELACMREANRVAVAGHNAAREAFYKGASEFEIQQQYLSAIGQGENDVPYGNIIALNQNAAILHYTALEHAAPANRHSFLIDAGASFNGYAADITRTYAFEKNVFDELIKAMDKMQRELVDMMRPGVRFTDLHLATHHKLAQLLLEFGIARGEASDLVEQGVTSVFFPHGLGHMLGLQVHDVAGFAHDERGTHLAAPERHPFLRCTRVLAPRHVLTIEPGFYIIDSLLTELKADGRAEAVNWDMVNTLRPFGGIRIEDNVIVHQERNENMTRDLGLN</sequence>
<comment type="function">
    <text evidence="1">Splits dipeptides with a prolyl residue in the C-terminal position.</text>
</comment>
<comment type="catalytic activity">
    <reaction evidence="1">
        <text>Xaa-L-Pro dipeptide + H2O = an L-alpha-amino acid + L-proline</text>
        <dbReference type="Rhea" id="RHEA:76407"/>
        <dbReference type="ChEBI" id="CHEBI:15377"/>
        <dbReference type="ChEBI" id="CHEBI:59869"/>
        <dbReference type="ChEBI" id="CHEBI:60039"/>
        <dbReference type="ChEBI" id="CHEBI:195196"/>
        <dbReference type="EC" id="3.4.13.9"/>
    </reaction>
</comment>
<comment type="cofactor">
    <cofactor evidence="1">
        <name>Mn(2+)</name>
        <dbReference type="ChEBI" id="CHEBI:29035"/>
    </cofactor>
    <text evidence="1">Binds 2 manganese ions per subunit.</text>
</comment>
<comment type="similarity">
    <text evidence="1">Belongs to the peptidase M24B family. Bacterial-type prolidase subfamily.</text>
</comment>
<protein>
    <recommendedName>
        <fullName evidence="1">Xaa-Pro dipeptidase</fullName>
        <shortName evidence="1">X-Pro dipeptidase</shortName>
        <ecNumber evidence="1">3.4.13.9</ecNumber>
    </recommendedName>
    <alternativeName>
        <fullName evidence="1">Imidodipeptidase</fullName>
    </alternativeName>
    <alternativeName>
        <fullName evidence="1">Proline dipeptidase</fullName>
        <shortName evidence="1">Prolidase</shortName>
    </alternativeName>
</protein>